<proteinExistence type="evidence at transcript level"/>
<organism>
    <name type="scientific">Rattus norvegicus</name>
    <name type="common">Rat</name>
    <dbReference type="NCBI Taxonomy" id="10116"/>
    <lineage>
        <taxon>Eukaryota</taxon>
        <taxon>Metazoa</taxon>
        <taxon>Chordata</taxon>
        <taxon>Craniata</taxon>
        <taxon>Vertebrata</taxon>
        <taxon>Euteleostomi</taxon>
        <taxon>Mammalia</taxon>
        <taxon>Eutheria</taxon>
        <taxon>Euarchontoglires</taxon>
        <taxon>Glires</taxon>
        <taxon>Rodentia</taxon>
        <taxon>Myomorpha</taxon>
        <taxon>Muroidea</taxon>
        <taxon>Muridae</taxon>
        <taxon>Murinae</taxon>
        <taxon>Rattus</taxon>
    </lineage>
</organism>
<feature type="chain" id="PRO_0000144183" description="Tumor suppressor ARF">
    <location>
        <begin position="1"/>
        <end position="160"/>
    </location>
</feature>
<feature type="region of interest" description="Interaction with CDK5RAP3 and MDM2" evidence="3">
    <location>
        <begin position="1"/>
        <end position="63"/>
    </location>
</feature>
<feature type="region of interest" description="Disordered" evidence="4">
    <location>
        <begin position="49"/>
        <end position="74"/>
    </location>
</feature>
<feature type="region of interest" description="Disordered" evidence="4">
    <location>
        <begin position="90"/>
        <end position="116"/>
    </location>
</feature>
<keyword id="KW-0025">Alternative splicing</keyword>
<keyword id="KW-0053">Apoptosis</keyword>
<keyword id="KW-0131">Cell cycle</keyword>
<keyword id="KW-0238">DNA-binding</keyword>
<keyword id="KW-0539">Nucleus</keyword>
<keyword id="KW-1185">Reference proteome</keyword>
<keyword id="KW-0698">rRNA processing</keyword>
<keyword id="KW-0804">Transcription</keyword>
<keyword id="KW-0805">Transcription regulation</keyword>
<keyword id="KW-0043">Tumor suppressor</keyword>
<keyword id="KW-0832">Ubl conjugation</keyword>
<keyword id="KW-0833">Ubl conjugation pathway</keyword>
<name>ARF_RAT</name>
<dbReference type="EMBL" id="AF474974">
    <property type="protein sequence ID" value="AAL76336.1"/>
    <property type="molecule type" value="mRNA"/>
</dbReference>
<dbReference type="EMBL" id="AF474975">
    <property type="protein sequence ID" value="AAL76337.1"/>
    <property type="molecule type" value="mRNA"/>
</dbReference>
<dbReference type="EMBL" id="AY679727">
    <property type="protein sequence ID" value="AAT92509.1"/>
    <property type="molecule type" value="mRNA"/>
</dbReference>
<dbReference type="EMBL" id="L81168">
    <property type="status" value="NOT_ANNOTATED_CDS"/>
    <property type="molecule type" value="Genomic_DNA"/>
</dbReference>
<dbReference type="FunCoup" id="Q8QZZ9">
    <property type="interactions" value="18"/>
</dbReference>
<dbReference type="STRING" id="10116.ENSRNOP00000072063"/>
<dbReference type="iPTMnet" id="Q8QZZ9"/>
<dbReference type="PhosphoSitePlus" id="Q8QZZ9"/>
<dbReference type="UCSC" id="RGD:2323">
    <molecule id="Q8QZZ9-1"/>
    <property type="organism name" value="rat"/>
</dbReference>
<dbReference type="AGR" id="RGD:2323"/>
<dbReference type="RGD" id="2323">
    <property type="gene designation" value="Cdkn2a"/>
</dbReference>
<dbReference type="InParanoid" id="Q8QZZ9"/>
<dbReference type="Proteomes" id="UP000002494">
    <property type="component" value="Unplaced"/>
</dbReference>
<dbReference type="GO" id="GO:0005737">
    <property type="term" value="C:cytoplasm"/>
    <property type="evidence" value="ECO:0000266"/>
    <property type="project" value="RGD"/>
</dbReference>
<dbReference type="GO" id="GO:0001652">
    <property type="term" value="C:granular component"/>
    <property type="evidence" value="ECO:0000266"/>
    <property type="project" value="RGD"/>
</dbReference>
<dbReference type="GO" id="GO:0005730">
    <property type="term" value="C:nucleolus"/>
    <property type="evidence" value="ECO:0000250"/>
    <property type="project" value="UniProtKB"/>
</dbReference>
<dbReference type="GO" id="GO:0005654">
    <property type="term" value="C:nucleoplasm"/>
    <property type="evidence" value="ECO:0000250"/>
    <property type="project" value="UniProtKB"/>
</dbReference>
<dbReference type="GO" id="GO:0005634">
    <property type="term" value="C:nucleus"/>
    <property type="evidence" value="ECO:0000266"/>
    <property type="project" value="RGD"/>
</dbReference>
<dbReference type="GO" id="GO:0032991">
    <property type="term" value="C:protein-containing complex"/>
    <property type="evidence" value="ECO:0000266"/>
    <property type="project" value="RGD"/>
</dbReference>
<dbReference type="GO" id="GO:0035985">
    <property type="term" value="C:senescence-associated heterochromatin focus"/>
    <property type="evidence" value="ECO:0000266"/>
    <property type="project" value="RGD"/>
</dbReference>
<dbReference type="GO" id="GO:0004861">
    <property type="term" value="F:cyclin-dependent protein serine/threonine kinase inhibitor activity"/>
    <property type="evidence" value="ECO:0000266"/>
    <property type="project" value="RGD"/>
</dbReference>
<dbReference type="GO" id="GO:0097718">
    <property type="term" value="F:disordered domain specific binding"/>
    <property type="evidence" value="ECO:0000266"/>
    <property type="project" value="RGD"/>
</dbReference>
<dbReference type="GO" id="GO:0003677">
    <property type="term" value="F:DNA binding"/>
    <property type="evidence" value="ECO:0007669"/>
    <property type="project" value="UniProtKB-KW"/>
</dbReference>
<dbReference type="GO" id="GO:0140297">
    <property type="term" value="F:DNA-binding transcription factor binding"/>
    <property type="evidence" value="ECO:0000266"/>
    <property type="project" value="RGD"/>
</dbReference>
<dbReference type="GO" id="GO:0097371">
    <property type="term" value="F:MDM2/MDM4 family protein binding"/>
    <property type="evidence" value="ECO:0000266"/>
    <property type="project" value="RGD"/>
</dbReference>
<dbReference type="GO" id="GO:0051059">
    <property type="term" value="F:NF-kappaB binding"/>
    <property type="evidence" value="ECO:0000266"/>
    <property type="project" value="RGD"/>
</dbReference>
<dbReference type="GO" id="GO:0019901">
    <property type="term" value="F:protein kinase binding"/>
    <property type="evidence" value="ECO:0000266"/>
    <property type="project" value="RGD"/>
</dbReference>
<dbReference type="GO" id="GO:0061629">
    <property type="term" value="F:RNA polymerase II-specific DNA-binding transcription factor binding"/>
    <property type="evidence" value="ECO:0000266"/>
    <property type="project" value="RGD"/>
</dbReference>
<dbReference type="GO" id="GO:0019789">
    <property type="term" value="F:SUMO transferase activity"/>
    <property type="evidence" value="ECO:0000266"/>
    <property type="project" value="RGD"/>
</dbReference>
<dbReference type="GO" id="GO:1990948">
    <property type="term" value="F:ubiquitin ligase inhibitor activity"/>
    <property type="evidence" value="ECO:0000266"/>
    <property type="project" value="RGD"/>
</dbReference>
<dbReference type="GO" id="GO:0055105">
    <property type="term" value="F:ubiquitin-protein transferase inhibitor activity"/>
    <property type="evidence" value="ECO:0000266"/>
    <property type="project" value="RGD"/>
</dbReference>
<dbReference type="GO" id="GO:1990000">
    <property type="term" value="P:amyloid fibril formation"/>
    <property type="evidence" value="ECO:0000266"/>
    <property type="project" value="RGD"/>
</dbReference>
<dbReference type="GO" id="GO:0060057">
    <property type="term" value="P:apoptotic process involved in mammary gland involution"/>
    <property type="evidence" value="ECO:0000266"/>
    <property type="project" value="RGD"/>
</dbReference>
<dbReference type="GO" id="GO:0097190">
    <property type="term" value="P:apoptotic signaling pathway"/>
    <property type="evidence" value="ECO:0000266"/>
    <property type="project" value="RGD"/>
</dbReference>
<dbReference type="GO" id="GO:0071333">
    <property type="term" value="P:cellular response to glucose stimulus"/>
    <property type="evidence" value="ECO:0000270"/>
    <property type="project" value="RGD"/>
</dbReference>
<dbReference type="GO" id="GO:0070301">
    <property type="term" value="P:cellular response to hydrogen peroxide"/>
    <property type="evidence" value="ECO:0000266"/>
    <property type="project" value="RGD"/>
</dbReference>
<dbReference type="GO" id="GO:0090398">
    <property type="term" value="P:cellular senescence"/>
    <property type="evidence" value="ECO:0000266"/>
    <property type="project" value="RGD"/>
</dbReference>
<dbReference type="GO" id="GO:0021549">
    <property type="term" value="P:cerebellum development"/>
    <property type="evidence" value="ECO:0000270"/>
    <property type="project" value="RGD"/>
</dbReference>
<dbReference type="GO" id="GO:0008544">
    <property type="term" value="P:epidermis development"/>
    <property type="evidence" value="ECO:0000266"/>
    <property type="project" value="RGD"/>
</dbReference>
<dbReference type="GO" id="GO:0042593">
    <property type="term" value="P:glucose homeostasis"/>
    <property type="evidence" value="ECO:0000266"/>
    <property type="project" value="RGD"/>
</dbReference>
<dbReference type="GO" id="GO:0030216">
    <property type="term" value="P:keratinocyte differentiation"/>
    <property type="evidence" value="ECO:0000266"/>
    <property type="project" value="RGD"/>
</dbReference>
<dbReference type="GO" id="GO:0043616">
    <property type="term" value="P:keratinocyte proliferation"/>
    <property type="evidence" value="ECO:0000266"/>
    <property type="project" value="RGD"/>
</dbReference>
<dbReference type="GO" id="GO:0033598">
    <property type="term" value="P:mammary gland epithelial cell proliferation"/>
    <property type="evidence" value="ECO:0000266"/>
    <property type="project" value="RGD"/>
</dbReference>
<dbReference type="GO" id="GO:0030889">
    <property type="term" value="P:negative regulation of B cell proliferation"/>
    <property type="evidence" value="ECO:0000266"/>
    <property type="project" value="RGD"/>
</dbReference>
<dbReference type="GO" id="GO:0045786">
    <property type="term" value="P:negative regulation of cell cycle"/>
    <property type="evidence" value="ECO:0000266"/>
    <property type="project" value="RGD"/>
</dbReference>
<dbReference type="GO" id="GO:0030308">
    <property type="term" value="P:negative regulation of cell growth"/>
    <property type="evidence" value="ECO:0000266"/>
    <property type="project" value="RGD"/>
</dbReference>
<dbReference type="GO" id="GO:0008285">
    <property type="term" value="P:negative regulation of cell population proliferation"/>
    <property type="evidence" value="ECO:0000266"/>
    <property type="project" value="RGD"/>
</dbReference>
<dbReference type="GO" id="GO:0001953">
    <property type="term" value="P:negative regulation of cell-matrix adhesion"/>
    <property type="evidence" value="ECO:0000266"/>
    <property type="project" value="RGD"/>
</dbReference>
<dbReference type="GO" id="GO:0045892">
    <property type="term" value="P:negative regulation of DNA-templated transcription"/>
    <property type="evidence" value="ECO:0000266"/>
    <property type="project" value="RGD"/>
</dbReference>
<dbReference type="GO" id="GO:2000346">
    <property type="term" value="P:negative regulation of hepatocyte proliferation"/>
    <property type="evidence" value="ECO:0000315"/>
    <property type="project" value="RGD"/>
</dbReference>
<dbReference type="GO" id="GO:0033088">
    <property type="term" value="P:negative regulation of immature T cell proliferation in thymus"/>
    <property type="evidence" value="ECO:0000266"/>
    <property type="project" value="RGD"/>
</dbReference>
<dbReference type="GO" id="GO:0033600">
    <property type="term" value="P:negative regulation of mammary gland epithelial cell proliferation"/>
    <property type="evidence" value="ECO:0000266"/>
    <property type="project" value="RGD"/>
</dbReference>
<dbReference type="GO" id="GO:1904750">
    <property type="term" value="P:negative regulation of protein localization to nucleolus"/>
    <property type="evidence" value="ECO:0000266"/>
    <property type="project" value="RGD"/>
</dbReference>
<dbReference type="GO" id="GO:2000435">
    <property type="term" value="P:negative regulation of protein neddylation"/>
    <property type="evidence" value="ECO:0000266"/>
    <property type="project" value="RGD"/>
</dbReference>
<dbReference type="GO" id="GO:1903051">
    <property type="term" value="P:negative regulation of proteolysis involved in protein catabolic process"/>
    <property type="evidence" value="ECO:0000266"/>
    <property type="project" value="RGD"/>
</dbReference>
<dbReference type="GO" id="GO:0090071">
    <property type="term" value="P:negative regulation of ribosome biogenesis"/>
    <property type="evidence" value="ECO:0000266"/>
    <property type="project" value="RGD"/>
</dbReference>
<dbReference type="GO" id="GO:0000122">
    <property type="term" value="P:negative regulation of transcription by RNA polymerase II"/>
    <property type="evidence" value="ECO:0000266"/>
    <property type="project" value="RGD"/>
</dbReference>
<dbReference type="GO" id="GO:2000059">
    <property type="term" value="P:negative regulation of ubiquitin-dependent protein catabolic process"/>
    <property type="evidence" value="ECO:0000266"/>
    <property type="project" value="RGD"/>
</dbReference>
<dbReference type="GO" id="GO:0022008">
    <property type="term" value="P:neurogenesis"/>
    <property type="evidence" value="ECO:0000270"/>
    <property type="project" value="RGD"/>
</dbReference>
<dbReference type="GO" id="GO:0090402">
    <property type="term" value="P:oncogene-induced cell senescence"/>
    <property type="evidence" value="ECO:0000266"/>
    <property type="project" value="RGD"/>
</dbReference>
<dbReference type="GO" id="GO:0043065">
    <property type="term" value="P:positive regulation of apoptotic process"/>
    <property type="evidence" value="ECO:0000315"/>
    <property type="project" value="RGD"/>
</dbReference>
<dbReference type="GO" id="GO:0060058">
    <property type="term" value="P:positive regulation of apoptotic process involved in mammary gland involution"/>
    <property type="evidence" value="ECO:0000266"/>
    <property type="project" value="RGD"/>
</dbReference>
<dbReference type="GO" id="GO:0045893">
    <property type="term" value="P:positive regulation of DNA-templated transcription"/>
    <property type="evidence" value="ECO:0000266"/>
    <property type="project" value="RGD"/>
</dbReference>
<dbReference type="GO" id="GO:0010628">
    <property type="term" value="P:positive regulation of gene expression"/>
    <property type="evidence" value="ECO:0000266"/>
    <property type="project" value="RGD"/>
</dbReference>
<dbReference type="GO" id="GO:0033235">
    <property type="term" value="P:positive regulation of protein sumoylation"/>
    <property type="evidence" value="ECO:0000266"/>
    <property type="project" value="RGD"/>
</dbReference>
<dbReference type="GO" id="GO:0045944">
    <property type="term" value="P:positive regulation of transcription by RNA polymerase II"/>
    <property type="evidence" value="ECO:0000266"/>
    <property type="project" value="RGD"/>
</dbReference>
<dbReference type="GO" id="GO:0031648">
    <property type="term" value="P:protein destabilization"/>
    <property type="evidence" value="ECO:0000266"/>
    <property type="project" value="RGD"/>
</dbReference>
<dbReference type="GO" id="GO:0070534">
    <property type="term" value="P:protein K63-linked ubiquitination"/>
    <property type="evidence" value="ECO:0000250"/>
    <property type="project" value="UniProtKB"/>
</dbReference>
<dbReference type="GO" id="GO:0000209">
    <property type="term" value="P:protein polyubiquitination"/>
    <property type="evidence" value="ECO:0000250"/>
    <property type="project" value="UniProtKB"/>
</dbReference>
<dbReference type="GO" id="GO:0050821">
    <property type="term" value="P:protein stabilization"/>
    <property type="evidence" value="ECO:0000266"/>
    <property type="project" value="RGD"/>
</dbReference>
<dbReference type="GO" id="GO:0007265">
    <property type="term" value="P:Ras protein signal transduction"/>
    <property type="evidence" value="ECO:0000266"/>
    <property type="project" value="RGD"/>
</dbReference>
<dbReference type="GO" id="GO:0051726">
    <property type="term" value="P:regulation of cell cycle"/>
    <property type="evidence" value="ECO:0000266"/>
    <property type="project" value="RGD"/>
</dbReference>
<dbReference type="GO" id="GO:2000045">
    <property type="term" value="P:regulation of G1/S transition of mitotic cell cycle"/>
    <property type="evidence" value="ECO:0000266"/>
    <property type="project" value="RGD"/>
</dbReference>
<dbReference type="GO" id="GO:0010468">
    <property type="term" value="P:regulation of gene expression"/>
    <property type="evidence" value="ECO:0000266"/>
    <property type="project" value="RGD"/>
</dbReference>
<dbReference type="GO" id="GO:0046822">
    <property type="term" value="P:regulation of nucleocytoplasmic transport"/>
    <property type="evidence" value="ECO:0000266"/>
    <property type="project" value="RGD"/>
</dbReference>
<dbReference type="GO" id="GO:0031647">
    <property type="term" value="P:regulation of protein stability"/>
    <property type="evidence" value="ECO:0000266"/>
    <property type="project" value="RGD"/>
</dbReference>
<dbReference type="GO" id="GO:0090399">
    <property type="term" value="P:replicative senescence"/>
    <property type="evidence" value="ECO:0000266"/>
    <property type="project" value="RGD"/>
</dbReference>
<dbReference type="GO" id="GO:0061771">
    <property type="term" value="P:response to caloric restriction"/>
    <property type="evidence" value="ECO:0000270"/>
    <property type="project" value="RGD"/>
</dbReference>
<dbReference type="GO" id="GO:0070542">
    <property type="term" value="P:response to fatty acid"/>
    <property type="evidence" value="ECO:0000270"/>
    <property type="project" value="RGD"/>
</dbReference>
<dbReference type="GO" id="GO:0009651">
    <property type="term" value="P:response to salt stress"/>
    <property type="evidence" value="ECO:0000270"/>
    <property type="project" value="RGD"/>
</dbReference>
<dbReference type="GO" id="GO:0009410">
    <property type="term" value="P:response to xenobiotic stimulus"/>
    <property type="evidence" value="ECO:0000314"/>
    <property type="project" value="RGD"/>
</dbReference>
<dbReference type="GO" id="GO:0006364">
    <property type="term" value="P:rRNA processing"/>
    <property type="evidence" value="ECO:0007669"/>
    <property type="project" value="UniProtKB-KW"/>
</dbReference>
<dbReference type="GO" id="GO:0009303">
    <property type="term" value="P:rRNA transcription"/>
    <property type="evidence" value="ECO:0000266"/>
    <property type="project" value="RGD"/>
</dbReference>
<dbReference type="GO" id="GO:0048103">
    <property type="term" value="P:somatic stem cell division"/>
    <property type="evidence" value="ECO:0000266"/>
    <property type="project" value="RGD"/>
</dbReference>
<dbReference type="GO" id="GO:0035019">
    <property type="term" value="P:somatic stem cell population maintenance"/>
    <property type="evidence" value="ECO:0000266"/>
    <property type="project" value="RGD"/>
</dbReference>
<dbReference type="Gene3D" id="6.10.250.60">
    <property type="match status" value="1"/>
</dbReference>
<dbReference type="InterPro" id="IPR010868">
    <property type="entry name" value="Tumor_suppres_ARF"/>
</dbReference>
<dbReference type="Pfam" id="PF07392">
    <property type="entry name" value="P19Arf_N"/>
    <property type="match status" value="1"/>
</dbReference>
<accession>Q8QZZ9</accession>
<reference evidence="6 7" key="1">
    <citation type="submission" date="2002-01" db="EMBL/GenBank/DDBJ databases">
        <authorList>
            <person name="Buckles L.K."/>
            <person name="Shull J.D."/>
        </authorList>
    </citation>
    <scope>NUCLEOTIDE SEQUENCE [MRNA]</scope>
    <source>
        <strain evidence="7">ACI/SegHsd</strain>
        <strain evidence="9">Brown Norway/SsNHsd</strain>
        <strain evidence="8">COP</strain>
        <tissue evidence="7">Lung</tissue>
    </source>
</reference>
<reference evidence="6" key="2">
    <citation type="journal article" date="1997" name="Mol. Cell. Biol.">
        <title>Frequent aberrant methylation of p16INK4a in primary rat lung tumors.</title>
        <authorList>
            <person name="Swafford D.S."/>
            <person name="Middleton S.K."/>
            <person name="Palmisano W.A."/>
            <person name="Nikula K.J."/>
            <person name="Tesfaigzi J."/>
            <person name="Baylin S.B."/>
            <person name="Herman J.G."/>
            <person name="Belinsky S.A."/>
        </authorList>
    </citation>
    <scope>NUCLEOTIDE SEQUENCE [GENOMIC DNA] OF 1-63</scope>
    <scope>TISSUE SPECIFICITY</scope>
    <source>
        <strain>Fischer 344/N</strain>
    </source>
</reference>
<gene>
    <name evidence="7 10" type="primary">Cdkn2a</name>
</gene>
<comment type="function">
    <text evidence="2 3">Capable of inducing cell cycle arrest in G1 and G2 phases. Acts as a tumor suppressor. Binds to MDM2 and blocks its nucleocytoplasmic shuttling by sequestering it in the nucleolus. This inhibits the oncogenic action of MDM2 by blocking MDM2-induced degradation of p53 and enhancing p53-dependent transactivation and apoptosis. Also induces G2 arrest and apoptosis in a p53-independent manner by preventing the activation of cyclin B1/CDC2 complexes. Binds to BCL6 and down-regulates BCL6-induced transcriptional repression. Binds to E2F1 and MYC and blocks their transcriptional activator activity but has no effect on MYC transcriptional repression. Binds to TOP1/TOPOI and stimulates its activity. This complex binds to rRNA gene promoters and may play a role in rRNA transcription and/or maturation. Interacts with NPM1/B23 and promotes its polyubiquitination and degradation, thus inhibiting rRNA processing. Plays a role in inhibiting ribosome biogenesis, perhaps by binding to the nucleolar localization sequence of transcription termination factor TTF1, and thereby preventing nucleolar localization of TTF1 (By similarity). Interacts with COMMD1 and promotes its 'Lys63'-linked polyubiquitination. Interacts with UBE2I/UBC9 and enhances sumoylation of a number of its binding partners including MDM2 and E2F1. Binds to HUWE1 and represses its ubiquitin ligase activity. May play a role in controlling cell proliferation and apoptosis during mammary gland development (By similarity).</text>
</comment>
<comment type="subunit">
    <text evidence="2 3">Does not interact with cyclins, CDK1, CDK2, CDK4, CDK5 or CDK6. Binds to BCL6, E2F1, HUWE1, MDM2, MYC, NPM1/B23, TOP1/TOPOI and UBE2I/UBC9. Interacts with TBRG1 and COMMD1. Interacts with CDKN2AIP and E4F1. Interacts with CDK5RAP3 and MDM2; form a ternary complex involved in regulation of p53/TP53. Interacts with NOP53; the interaction is direct and promotes ARF nucleoplasmic relocalization and ubiquitin-mediated proteasomal degradation (By similarity). Interacts with TTF1 (via the N-terminal region (NRD) and a C-terminal region); the interaction is direct and inhibits the nucleolar localization of TTF1 (By similarity).</text>
</comment>
<comment type="subcellular location">
    <subcellularLocation>
        <location evidence="3">Nucleus</location>
        <location evidence="3">Nucleolus</location>
    </subcellularLocation>
    <subcellularLocation>
        <location evidence="3">Nucleus</location>
        <location evidence="3">Nucleoplasm</location>
    </subcellularLocation>
</comment>
<comment type="alternative products">
    <event type="alternative splicing"/>
    <isoform>
        <id>Q8QZZ9-1</id>
        <name evidence="1">tumor suppressor ARF</name>
        <name>p19ARF</name>
        <sequence type="displayed"/>
    </isoform>
    <isoform>
        <id>Q9R0Z3-1</id>
        <name evidence="3">1</name>
        <name evidence="3">p16INK4a</name>
        <sequence type="external"/>
    </isoform>
    <text evidence="1">Isoform 1 and isoform tumor suppressor ARF arise due to the use of two alternative first exons joined to a common exon 2 at the same acceptor site but in different reading frames, resulting in two completely different isoforms.</text>
</comment>
<comment type="tissue specificity">
    <text evidence="5">Widely expressed with very low levels in kidney and colon.</text>
</comment>
<comment type="PTM">
    <text evidence="3">Ubiquitinated in normal cells by TRIP12 via the ubiquitin fusion degradation (UFD) pathway, a process that mediates ubiquitination at the N-terminus, regardless of the absence of lysine residues. Ubiquitination leads to its proteasomal degradation. In cancer cells, however, TRIP12 is located in a different cell compartment, preventing ubiquitination and degradation.</text>
</comment>
<comment type="caution">
    <text evidence="6">The proteins described here are encoded by the gene CDKN2A, but are completely unrelated in terms of sequence and function to cyclin-dependent kinase inhibitor 2A (AC Q9R0Z3) which is encoded by the same gene.</text>
</comment>
<sequence length="160" mass="17307">MGRRFVVTVRIRRTGRSPQVRVFLVQFLGSSRPRSANGTRGFVALVLRPERIARRGPQPHPGPGDDDGQRQSGSSPALLWCRFELRGPHHPLPTGARRSAGGLPRHSGSTAPGRGAAGCARCLGSPAARPGPRAGTSRRRAVFAVSTLLRWERFPGHRQA</sequence>
<evidence type="ECO:0000250" key="1">
    <source>
        <dbReference type="UniProtKB" id="Q64363"/>
    </source>
</evidence>
<evidence type="ECO:0000250" key="2">
    <source>
        <dbReference type="UniProtKB" id="Q64364"/>
    </source>
</evidence>
<evidence type="ECO:0000250" key="3">
    <source>
        <dbReference type="UniProtKB" id="Q8N726"/>
    </source>
</evidence>
<evidence type="ECO:0000256" key="4">
    <source>
        <dbReference type="SAM" id="MobiDB-lite"/>
    </source>
</evidence>
<evidence type="ECO:0000269" key="5">
    <source>
    </source>
</evidence>
<evidence type="ECO:0000305" key="6"/>
<evidence type="ECO:0000312" key="7">
    <source>
        <dbReference type="EMBL" id="AAL76336.1"/>
    </source>
</evidence>
<evidence type="ECO:0000312" key="8">
    <source>
        <dbReference type="EMBL" id="AAL76337.1"/>
    </source>
</evidence>
<evidence type="ECO:0000312" key="9">
    <source>
        <dbReference type="EMBL" id="AAT92509.1"/>
    </source>
</evidence>
<evidence type="ECO:0000312" key="10">
    <source>
        <dbReference type="RGD" id="2323"/>
    </source>
</evidence>
<protein>
    <recommendedName>
        <fullName evidence="6">Tumor suppressor ARF</fullName>
    </recommendedName>
    <alternativeName>
        <fullName>Alternative reading frame</fullName>
        <shortName>ARF</shortName>
    </alternativeName>
    <alternativeName>
        <fullName>Cyclin-dependent kinase inhibitor 2A</fullName>
    </alternativeName>
    <alternativeName>
        <fullName>p19ARF</fullName>
    </alternativeName>
</protein>